<sequence>MVMTDPIADFLTRIRNGNMRKFDVVEAPASKIKRQIAEILKAEGYVKDVEYVEDNKQGVIRVFLKYGKNGEKVITNLKRISKPGLRVYVKSDDIPKVLNGLGTAIISTSTGVVTDKVARETNVGGEVIAYIW</sequence>
<reference key="1">
    <citation type="journal article" date="2001" name="Genome Res.">
        <title>The complete genome sequence of the lactic acid bacterium Lactococcus lactis ssp. lactis IL1403.</title>
        <authorList>
            <person name="Bolotin A."/>
            <person name="Wincker P."/>
            <person name="Mauger S."/>
            <person name="Jaillon O."/>
            <person name="Malarme K."/>
            <person name="Weissenbach J."/>
            <person name="Ehrlich S.D."/>
            <person name="Sorokin A."/>
        </authorList>
    </citation>
    <scope>NUCLEOTIDE SEQUENCE [LARGE SCALE GENOMIC DNA]</scope>
    <source>
        <strain>IL1403</strain>
    </source>
</reference>
<keyword id="KW-1185">Reference proteome</keyword>
<keyword id="KW-0687">Ribonucleoprotein</keyword>
<keyword id="KW-0689">Ribosomal protein</keyword>
<keyword id="KW-0694">RNA-binding</keyword>
<keyword id="KW-0699">rRNA-binding</keyword>
<evidence type="ECO:0000255" key="1">
    <source>
        <dbReference type="HAMAP-Rule" id="MF_01302"/>
    </source>
</evidence>
<evidence type="ECO:0000305" key="2"/>
<comment type="function">
    <text evidence="1">One of the primary rRNA binding proteins, it binds directly to 16S rRNA central domain where it helps coordinate assembly of the platform of the 30S subunit.</text>
</comment>
<comment type="subunit">
    <text evidence="1">Part of the 30S ribosomal subunit. Contacts proteins S5 and S12.</text>
</comment>
<comment type="similarity">
    <text evidence="1">Belongs to the universal ribosomal protein uS8 family.</text>
</comment>
<organism>
    <name type="scientific">Lactococcus lactis subsp. lactis (strain IL1403)</name>
    <name type="common">Streptococcus lactis</name>
    <dbReference type="NCBI Taxonomy" id="272623"/>
    <lineage>
        <taxon>Bacteria</taxon>
        <taxon>Bacillati</taxon>
        <taxon>Bacillota</taxon>
        <taxon>Bacilli</taxon>
        <taxon>Lactobacillales</taxon>
        <taxon>Streptococcaceae</taxon>
        <taxon>Lactococcus</taxon>
    </lineage>
</organism>
<dbReference type="EMBL" id="AE005176">
    <property type="protein sequence ID" value="AAK06182.1"/>
    <property type="molecule type" value="Genomic_DNA"/>
</dbReference>
<dbReference type="PIR" id="D86885">
    <property type="entry name" value="D86885"/>
</dbReference>
<dbReference type="RefSeq" id="NP_268241.1">
    <property type="nucleotide sequence ID" value="NC_002662.1"/>
</dbReference>
<dbReference type="RefSeq" id="WP_010906299.1">
    <property type="nucleotide sequence ID" value="NC_002662.1"/>
</dbReference>
<dbReference type="SMR" id="Q9CDX7"/>
<dbReference type="PaxDb" id="272623-L0385"/>
<dbReference type="EnsemblBacteria" id="AAK06182">
    <property type="protein sequence ID" value="AAK06182"/>
    <property type="gene ID" value="L0385"/>
</dbReference>
<dbReference type="KEGG" id="lla:L0385"/>
<dbReference type="PATRIC" id="fig|272623.7.peg.2243"/>
<dbReference type="eggNOG" id="COG0096">
    <property type="taxonomic scope" value="Bacteria"/>
</dbReference>
<dbReference type="HOGENOM" id="CLU_098428_0_2_9"/>
<dbReference type="OrthoDB" id="9802617at2"/>
<dbReference type="Proteomes" id="UP000002196">
    <property type="component" value="Chromosome"/>
</dbReference>
<dbReference type="GO" id="GO:1990904">
    <property type="term" value="C:ribonucleoprotein complex"/>
    <property type="evidence" value="ECO:0007669"/>
    <property type="project" value="UniProtKB-KW"/>
</dbReference>
<dbReference type="GO" id="GO:0005840">
    <property type="term" value="C:ribosome"/>
    <property type="evidence" value="ECO:0007669"/>
    <property type="project" value="UniProtKB-KW"/>
</dbReference>
<dbReference type="GO" id="GO:0019843">
    <property type="term" value="F:rRNA binding"/>
    <property type="evidence" value="ECO:0007669"/>
    <property type="project" value="UniProtKB-UniRule"/>
</dbReference>
<dbReference type="GO" id="GO:0003735">
    <property type="term" value="F:structural constituent of ribosome"/>
    <property type="evidence" value="ECO:0007669"/>
    <property type="project" value="InterPro"/>
</dbReference>
<dbReference type="GO" id="GO:0006412">
    <property type="term" value="P:translation"/>
    <property type="evidence" value="ECO:0007669"/>
    <property type="project" value="UniProtKB-UniRule"/>
</dbReference>
<dbReference type="FunFam" id="3.30.1370.30:FF:000002">
    <property type="entry name" value="30S ribosomal protein S8"/>
    <property type="match status" value="1"/>
</dbReference>
<dbReference type="FunFam" id="3.30.1490.10:FF:000001">
    <property type="entry name" value="30S ribosomal protein S8"/>
    <property type="match status" value="1"/>
</dbReference>
<dbReference type="Gene3D" id="3.30.1370.30">
    <property type="match status" value="1"/>
</dbReference>
<dbReference type="Gene3D" id="3.30.1490.10">
    <property type="match status" value="1"/>
</dbReference>
<dbReference type="HAMAP" id="MF_01302_B">
    <property type="entry name" value="Ribosomal_uS8_B"/>
    <property type="match status" value="1"/>
</dbReference>
<dbReference type="InterPro" id="IPR000630">
    <property type="entry name" value="Ribosomal_uS8"/>
</dbReference>
<dbReference type="InterPro" id="IPR047863">
    <property type="entry name" value="Ribosomal_uS8_CS"/>
</dbReference>
<dbReference type="InterPro" id="IPR035987">
    <property type="entry name" value="Ribosomal_uS8_sf"/>
</dbReference>
<dbReference type="NCBIfam" id="NF001109">
    <property type="entry name" value="PRK00136.1"/>
    <property type="match status" value="1"/>
</dbReference>
<dbReference type="PANTHER" id="PTHR11758">
    <property type="entry name" value="40S RIBOSOMAL PROTEIN S15A"/>
    <property type="match status" value="1"/>
</dbReference>
<dbReference type="Pfam" id="PF00410">
    <property type="entry name" value="Ribosomal_S8"/>
    <property type="match status" value="1"/>
</dbReference>
<dbReference type="SUPFAM" id="SSF56047">
    <property type="entry name" value="Ribosomal protein S8"/>
    <property type="match status" value="1"/>
</dbReference>
<dbReference type="PROSITE" id="PS00053">
    <property type="entry name" value="RIBOSOMAL_S8"/>
    <property type="match status" value="1"/>
</dbReference>
<name>RS8_LACLA</name>
<accession>Q9CDX7</accession>
<gene>
    <name evidence="1" type="primary">rpsH</name>
    <name type="ordered locus">LL2084</name>
    <name type="ORF">L0385</name>
</gene>
<proteinExistence type="inferred from homology"/>
<feature type="chain" id="PRO_0000126424" description="Small ribosomal subunit protein uS8">
    <location>
        <begin position="1"/>
        <end position="132"/>
    </location>
</feature>
<protein>
    <recommendedName>
        <fullName evidence="1">Small ribosomal subunit protein uS8</fullName>
    </recommendedName>
    <alternativeName>
        <fullName evidence="2">30S ribosomal protein S8</fullName>
    </alternativeName>
</protein>